<sequence length="74" mass="8485">MLVLSRKANESIMIGKDIEIKVLGIEDGKVKIGIDAPRGLEIYRREIYVEIEEENITASKQNLNLENLKILFKK</sequence>
<organism>
    <name type="scientific">Alkaliphilus oremlandii (strain OhILAs)</name>
    <name type="common">Clostridium oremlandii (strain OhILAs)</name>
    <dbReference type="NCBI Taxonomy" id="350688"/>
    <lineage>
        <taxon>Bacteria</taxon>
        <taxon>Bacillati</taxon>
        <taxon>Bacillota</taxon>
        <taxon>Clostridia</taxon>
        <taxon>Peptostreptococcales</taxon>
        <taxon>Natronincolaceae</taxon>
        <taxon>Alkaliphilus</taxon>
    </lineage>
</organism>
<name>CSRA_ALKOO</name>
<comment type="function">
    <text evidence="1">A translational regulator that binds mRNA to regulate translation initiation and/or mRNA stability. Usually binds in the 5'-UTR at or near the Shine-Dalgarno sequence preventing ribosome-binding, thus repressing translation. Its main target seems to be the major flagellin gene, while its function is anatagonized by FliW.</text>
</comment>
<comment type="subunit">
    <text evidence="1">Homodimer; the beta-strands of each monomer intercalate to form a hydrophobic core, while the alpha-helices form wings that extend away from the core.</text>
</comment>
<comment type="subcellular location">
    <subcellularLocation>
        <location evidence="1">Cytoplasm</location>
    </subcellularLocation>
</comment>
<comment type="similarity">
    <text evidence="1">Belongs to the CsrA/RsmA family.</text>
</comment>
<keyword id="KW-1005">Bacterial flagellum biogenesis</keyword>
<keyword id="KW-0963">Cytoplasm</keyword>
<keyword id="KW-1185">Reference proteome</keyword>
<keyword id="KW-0678">Repressor</keyword>
<keyword id="KW-0694">RNA-binding</keyword>
<keyword id="KW-0810">Translation regulation</keyword>
<proteinExistence type="inferred from homology"/>
<feature type="chain" id="PRO_1000058266" description="Translational regulator CsrA">
    <location>
        <begin position="1"/>
        <end position="74"/>
    </location>
</feature>
<reference key="1">
    <citation type="submission" date="2007-10" db="EMBL/GenBank/DDBJ databases">
        <title>Complete genome of Alkaliphilus oremlandii OhILAs.</title>
        <authorList>
            <person name="Copeland A."/>
            <person name="Lucas S."/>
            <person name="Lapidus A."/>
            <person name="Barry K."/>
            <person name="Detter J.C."/>
            <person name="Glavina del Rio T."/>
            <person name="Hammon N."/>
            <person name="Israni S."/>
            <person name="Dalin E."/>
            <person name="Tice H."/>
            <person name="Pitluck S."/>
            <person name="Chain P."/>
            <person name="Malfatti S."/>
            <person name="Shin M."/>
            <person name="Vergez L."/>
            <person name="Schmutz J."/>
            <person name="Larimer F."/>
            <person name="Land M."/>
            <person name="Hauser L."/>
            <person name="Kyrpides N."/>
            <person name="Mikhailova N."/>
            <person name="Stolz J.F."/>
            <person name="Dawson A."/>
            <person name="Fisher E."/>
            <person name="Crable B."/>
            <person name="Perera E."/>
            <person name="Lisak J."/>
            <person name="Ranganathan M."/>
            <person name="Basu P."/>
            <person name="Richardson P."/>
        </authorList>
    </citation>
    <scope>NUCLEOTIDE SEQUENCE [LARGE SCALE GENOMIC DNA]</scope>
    <source>
        <strain>OhILAs</strain>
    </source>
</reference>
<evidence type="ECO:0000255" key="1">
    <source>
        <dbReference type="HAMAP-Rule" id="MF_00167"/>
    </source>
</evidence>
<protein>
    <recommendedName>
        <fullName evidence="1">Translational regulator CsrA</fullName>
    </recommendedName>
</protein>
<gene>
    <name evidence="1" type="primary">csrA</name>
    <name type="ordered locus">Clos_2494</name>
</gene>
<dbReference type="EMBL" id="CP000853">
    <property type="protein sequence ID" value="ABW20026.1"/>
    <property type="molecule type" value="Genomic_DNA"/>
</dbReference>
<dbReference type="RefSeq" id="WP_012160333.1">
    <property type="nucleotide sequence ID" value="NC_009922.1"/>
</dbReference>
<dbReference type="SMR" id="A8MJP4"/>
<dbReference type="STRING" id="350688.Clos_2494"/>
<dbReference type="KEGG" id="aoe:Clos_2494"/>
<dbReference type="eggNOG" id="COG1551">
    <property type="taxonomic scope" value="Bacteria"/>
</dbReference>
<dbReference type="HOGENOM" id="CLU_164837_0_1_9"/>
<dbReference type="OrthoDB" id="9809061at2"/>
<dbReference type="Proteomes" id="UP000000269">
    <property type="component" value="Chromosome"/>
</dbReference>
<dbReference type="GO" id="GO:0005829">
    <property type="term" value="C:cytosol"/>
    <property type="evidence" value="ECO:0007669"/>
    <property type="project" value="TreeGrafter"/>
</dbReference>
<dbReference type="GO" id="GO:0048027">
    <property type="term" value="F:mRNA 5'-UTR binding"/>
    <property type="evidence" value="ECO:0007669"/>
    <property type="project" value="UniProtKB-UniRule"/>
</dbReference>
<dbReference type="GO" id="GO:0044781">
    <property type="term" value="P:bacterial-type flagellum organization"/>
    <property type="evidence" value="ECO:0007669"/>
    <property type="project" value="UniProtKB-KW"/>
</dbReference>
<dbReference type="GO" id="GO:0006402">
    <property type="term" value="P:mRNA catabolic process"/>
    <property type="evidence" value="ECO:0007669"/>
    <property type="project" value="InterPro"/>
</dbReference>
<dbReference type="GO" id="GO:0045947">
    <property type="term" value="P:negative regulation of translational initiation"/>
    <property type="evidence" value="ECO:0007669"/>
    <property type="project" value="UniProtKB-UniRule"/>
</dbReference>
<dbReference type="GO" id="GO:1902208">
    <property type="term" value="P:regulation of bacterial-type flagellum assembly"/>
    <property type="evidence" value="ECO:0007669"/>
    <property type="project" value="UniProtKB-UniRule"/>
</dbReference>
<dbReference type="GO" id="GO:0006109">
    <property type="term" value="P:regulation of carbohydrate metabolic process"/>
    <property type="evidence" value="ECO:0007669"/>
    <property type="project" value="InterPro"/>
</dbReference>
<dbReference type="FunFam" id="2.60.40.4380:FF:000002">
    <property type="entry name" value="Translational regulator CsrA"/>
    <property type="match status" value="1"/>
</dbReference>
<dbReference type="Gene3D" id="2.60.40.4380">
    <property type="entry name" value="Translational regulator CsrA"/>
    <property type="match status" value="1"/>
</dbReference>
<dbReference type="HAMAP" id="MF_00167">
    <property type="entry name" value="CsrA"/>
    <property type="match status" value="1"/>
</dbReference>
<dbReference type="InterPro" id="IPR003751">
    <property type="entry name" value="CsrA"/>
</dbReference>
<dbReference type="InterPro" id="IPR036107">
    <property type="entry name" value="CsrA_sf"/>
</dbReference>
<dbReference type="NCBIfam" id="TIGR00202">
    <property type="entry name" value="csrA"/>
    <property type="match status" value="1"/>
</dbReference>
<dbReference type="NCBIfam" id="NF002469">
    <property type="entry name" value="PRK01712.1"/>
    <property type="match status" value="1"/>
</dbReference>
<dbReference type="PANTHER" id="PTHR34984">
    <property type="entry name" value="CARBON STORAGE REGULATOR"/>
    <property type="match status" value="1"/>
</dbReference>
<dbReference type="PANTHER" id="PTHR34984:SF1">
    <property type="entry name" value="CARBON STORAGE REGULATOR"/>
    <property type="match status" value="1"/>
</dbReference>
<dbReference type="Pfam" id="PF02599">
    <property type="entry name" value="CsrA"/>
    <property type="match status" value="1"/>
</dbReference>
<dbReference type="SUPFAM" id="SSF117130">
    <property type="entry name" value="CsrA-like"/>
    <property type="match status" value="1"/>
</dbReference>
<accession>A8MJP4</accession>